<reference key="1">
    <citation type="journal article" date="2009" name="J. Bacteriol.">
        <title>Complete and draft genome sequences of six members of the Aquificales.</title>
        <authorList>
            <person name="Reysenbach A.-L."/>
            <person name="Hamamura N."/>
            <person name="Podar M."/>
            <person name="Griffiths E."/>
            <person name="Ferreira S."/>
            <person name="Hochstein R."/>
            <person name="Heidelberg J."/>
            <person name="Johnson J."/>
            <person name="Mead D."/>
            <person name="Pohorille A."/>
            <person name="Sarmiento M."/>
            <person name="Schweighofer K."/>
            <person name="Seshadri R."/>
            <person name="Voytek M.A."/>
        </authorList>
    </citation>
    <scope>NUCLEOTIDE SEQUENCE [LARGE SCALE GENOMIC DNA]</scope>
    <source>
        <strain>DSM 14350 / EX-H1</strain>
    </source>
</reference>
<sequence>MRNIYLVGFMGSGKSTVGKLLAEKLGFRFVDIDQEIEKEEGKKIKDIFREKGESYFRDLEKRMIERFLGSKNLVVSTGGGLGADSENMRKMKENGTVIWLDTPLETVFERCKGDDERPLLKKNRKEIKELFEKRKKIYAQADIRISTEGKSPYQIVNEILGRIR</sequence>
<evidence type="ECO:0000255" key="1">
    <source>
        <dbReference type="HAMAP-Rule" id="MF_00109"/>
    </source>
</evidence>
<proteinExistence type="inferred from homology"/>
<accession>C0QR76</accession>
<gene>
    <name evidence="1" type="primary">aroK</name>
    <name type="ordered locus">PERMA_1404</name>
</gene>
<name>AROK_PERMH</name>
<feature type="chain" id="PRO_1000119061" description="Shikimate kinase">
    <location>
        <begin position="1"/>
        <end position="164"/>
    </location>
</feature>
<feature type="binding site" evidence="1">
    <location>
        <begin position="11"/>
        <end position="16"/>
    </location>
    <ligand>
        <name>ATP</name>
        <dbReference type="ChEBI" id="CHEBI:30616"/>
    </ligand>
</feature>
<feature type="binding site" evidence="1">
    <location>
        <position position="15"/>
    </location>
    <ligand>
        <name>Mg(2+)</name>
        <dbReference type="ChEBI" id="CHEBI:18420"/>
    </ligand>
</feature>
<feature type="binding site" evidence="1">
    <location>
        <position position="33"/>
    </location>
    <ligand>
        <name>substrate</name>
    </ligand>
</feature>
<feature type="binding site" evidence="1">
    <location>
        <position position="57"/>
    </location>
    <ligand>
        <name>substrate</name>
    </ligand>
</feature>
<feature type="binding site" evidence="1">
    <location>
        <position position="79"/>
    </location>
    <ligand>
        <name>substrate</name>
    </ligand>
</feature>
<feature type="binding site" evidence="1">
    <location>
        <position position="117"/>
    </location>
    <ligand>
        <name>ATP</name>
        <dbReference type="ChEBI" id="CHEBI:30616"/>
    </ligand>
</feature>
<feature type="binding site" evidence="1">
    <location>
        <position position="134"/>
    </location>
    <ligand>
        <name>substrate</name>
    </ligand>
</feature>
<organism>
    <name type="scientific">Persephonella marina (strain DSM 14350 / EX-H1)</name>
    <dbReference type="NCBI Taxonomy" id="123214"/>
    <lineage>
        <taxon>Bacteria</taxon>
        <taxon>Pseudomonadati</taxon>
        <taxon>Aquificota</taxon>
        <taxon>Aquificia</taxon>
        <taxon>Aquificales</taxon>
        <taxon>Hydrogenothermaceae</taxon>
        <taxon>Persephonella</taxon>
    </lineage>
</organism>
<protein>
    <recommendedName>
        <fullName evidence="1">Shikimate kinase</fullName>
        <shortName evidence="1">SK</shortName>
        <ecNumber evidence="1">2.7.1.71</ecNumber>
    </recommendedName>
</protein>
<dbReference type="EC" id="2.7.1.71" evidence="1"/>
<dbReference type="EMBL" id="CP001230">
    <property type="protein sequence ID" value="ACO04341.1"/>
    <property type="molecule type" value="Genomic_DNA"/>
</dbReference>
<dbReference type="RefSeq" id="WP_012676579.1">
    <property type="nucleotide sequence ID" value="NC_012440.1"/>
</dbReference>
<dbReference type="SMR" id="C0QR76"/>
<dbReference type="STRING" id="123214.PERMA_1404"/>
<dbReference type="PaxDb" id="123214-PERMA_1404"/>
<dbReference type="KEGG" id="pmx:PERMA_1404"/>
<dbReference type="eggNOG" id="COG0703">
    <property type="taxonomic scope" value="Bacteria"/>
</dbReference>
<dbReference type="HOGENOM" id="CLU_057607_2_2_0"/>
<dbReference type="OrthoDB" id="9800332at2"/>
<dbReference type="UniPathway" id="UPA00053">
    <property type="reaction ID" value="UER00088"/>
</dbReference>
<dbReference type="Proteomes" id="UP000001366">
    <property type="component" value="Chromosome"/>
</dbReference>
<dbReference type="GO" id="GO:0005829">
    <property type="term" value="C:cytosol"/>
    <property type="evidence" value="ECO:0007669"/>
    <property type="project" value="TreeGrafter"/>
</dbReference>
<dbReference type="GO" id="GO:0005524">
    <property type="term" value="F:ATP binding"/>
    <property type="evidence" value="ECO:0007669"/>
    <property type="project" value="UniProtKB-UniRule"/>
</dbReference>
<dbReference type="GO" id="GO:0000287">
    <property type="term" value="F:magnesium ion binding"/>
    <property type="evidence" value="ECO:0007669"/>
    <property type="project" value="UniProtKB-UniRule"/>
</dbReference>
<dbReference type="GO" id="GO:0004765">
    <property type="term" value="F:shikimate kinase activity"/>
    <property type="evidence" value="ECO:0007669"/>
    <property type="project" value="UniProtKB-UniRule"/>
</dbReference>
<dbReference type="GO" id="GO:0008652">
    <property type="term" value="P:amino acid biosynthetic process"/>
    <property type="evidence" value="ECO:0007669"/>
    <property type="project" value="UniProtKB-KW"/>
</dbReference>
<dbReference type="GO" id="GO:0009073">
    <property type="term" value="P:aromatic amino acid family biosynthetic process"/>
    <property type="evidence" value="ECO:0007669"/>
    <property type="project" value="UniProtKB-KW"/>
</dbReference>
<dbReference type="GO" id="GO:0009423">
    <property type="term" value="P:chorismate biosynthetic process"/>
    <property type="evidence" value="ECO:0007669"/>
    <property type="project" value="UniProtKB-UniRule"/>
</dbReference>
<dbReference type="CDD" id="cd00464">
    <property type="entry name" value="SK"/>
    <property type="match status" value="1"/>
</dbReference>
<dbReference type="Gene3D" id="3.40.50.300">
    <property type="entry name" value="P-loop containing nucleotide triphosphate hydrolases"/>
    <property type="match status" value="1"/>
</dbReference>
<dbReference type="HAMAP" id="MF_00109">
    <property type="entry name" value="Shikimate_kinase"/>
    <property type="match status" value="1"/>
</dbReference>
<dbReference type="InterPro" id="IPR027417">
    <property type="entry name" value="P-loop_NTPase"/>
</dbReference>
<dbReference type="InterPro" id="IPR031322">
    <property type="entry name" value="Shikimate/glucono_kinase"/>
</dbReference>
<dbReference type="InterPro" id="IPR000623">
    <property type="entry name" value="Shikimate_kinase/TSH1"/>
</dbReference>
<dbReference type="InterPro" id="IPR023000">
    <property type="entry name" value="Shikimate_kinase_CS"/>
</dbReference>
<dbReference type="PANTHER" id="PTHR21087">
    <property type="entry name" value="SHIKIMATE KINASE"/>
    <property type="match status" value="1"/>
</dbReference>
<dbReference type="PANTHER" id="PTHR21087:SF16">
    <property type="entry name" value="SHIKIMATE KINASE 1, CHLOROPLASTIC"/>
    <property type="match status" value="1"/>
</dbReference>
<dbReference type="Pfam" id="PF01202">
    <property type="entry name" value="SKI"/>
    <property type="match status" value="1"/>
</dbReference>
<dbReference type="PRINTS" id="PR01100">
    <property type="entry name" value="SHIKIMTKNASE"/>
</dbReference>
<dbReference type="SUPFAM" id="SSF52540">
    <property type="entry name" value="P-loop containing nucleoside triphosphate hydrolases"/>
    <property type="match status" value="1"/>
</dbReference>
<dbReference type="PROSITE" id="PS01128">
    <property type="entry name" value="SHIKIMATE_KINASE"/>
    <property type="match status" value="1"/>
</dbReference>
<comment type="function">
    <text evidence="1">Catalyzes the specific phosphorylation of the 3-hydroxyl group of shikimic acid using ATP as a cosubstrate.</text>
</comment>
<comment type="catalytic activity">
    <reaction evidence="1">
        <text>shikimate + ATP = 3-phosphoshikimate + ADP + H(+)</text>
        <dbReference type="Rhea" id="RHEA:13121"/>
        <dbReference type="ChEBI" id="CHEBI:15378"/>
        <dbReference type="ChEBI" id="CHEBI:30616"/>
        <dbReference type="ChEBI" id="CHEBI:36208"/>
        <dbReference type="ChEBI" id="CHEBI:145989"/>
        <dbReference type="ChEBI" id="CHEBI:456216"/>
        <dbReference type="EC" id="2.7.1.71"/>
    </reaction>
</comment>
<comment type="cofactor">
    <cofactor evidence="1">
        <name>Mg(2+)</name>
        <dbReference type="ChEBI" id="CHEBI:18420"/>
    </cofactor>
    <text evidence="1">Binds 1 Mg(2+) ion per subunit.</text>
</comment>
<comment type="pathway">
    <text evidence="1">Metabolic intermediate biosynthesis; chorismate biosynthesis; chorismate from D-erythrose 4-phosphate and phosphoenolpyruvate: step 5/7.</text>
</comment>
<comment type="subunit">
    <text evidence="1">Monomer.</text>
</comment>
<comment type="subcellular location">
    <subcellularLocation>
        <location evidence="1">Cytoplasm</location>
    </subcellularLocation>
</comment>
<comment type="similarity">
    <text evidence="1">Belongs to the shikimate kinase family.</text>
</comment>
<keyword id="KW-0028">Amino-acid biosynthesis</keyword>
<keyword id="KW-0057">Aromatic amino acid biosynthesis</keyword>
<keyword id="KW-0067">ATP-binding</keyword>
<keyword id="KW-0963">Cytoplasm</keyword>
<keyword id="KW-0418">Kinase</keyword>
<keyword id="KW-0460">Magnesium</keyword>
<keyword id="KW-0479">Metal-binding</keyword>
<keyword id="KW-0547">Nucleotide-binding</keyword>
<keyword id="KW-1185">Reference proteome</keyword>
<keyword id="KW-0808">Transferase</keyword>